<organism>
    <name type="scientific">Ornithorhynchus anatinus</name>
    <name type="common">Duckbill platypus</name>
    <dbReference type="NCBI Taxonomy" id="9258"/>
    <lineage>
        <taxon>Eukaryota</taxon>
        <taxon>Metazoa</taxon>
        <taxon>Chordata</taxon>
        <taxon>Craniata</taxon>
        <taxon>Vertebrata</taxon>
        <taxon>Euteleostomi</taxon>
        <taxon>Mammalia</taxon>
        <taxon>Monotremata</taxon>
        <taxon>Ornithorhynchidae</taxon>
        <taxon>Ornithorhynchus</taxon>
    </lineage>
</organism>
<evidence type="ECO:0000250" key="1">
    <source>
        <dbReference type="UniProtKB" id="P03901"/>
    </source>
</evidence>
<evidence type="ECO:0000250" key="2">
    <source>
        <dbReference type="UniProtKB" id="P03902"/>
    </source>
</evidence>
<evidence type="ECO:0000255" key="3"/>
<evidence type="ECO:0000305" key="4"/>
<evidence type="ECO:0000312" key="5">
    <source>
        <dbReference type="Proteomes" id="UP000002279"/>
    </source>
</evidence>
<sequence length="98" mass="10852">MTTMFLNLLLAFTVALVGVFIYREHLMSTLLCLEGMMLSIFIMVALILLHHHLNSTMMLPLILLVFSACEAGVGLALLVKTSNSYGTDHINNLNLLQC</sequence>
<geneLocation type="mitochondrion"/>
<comment type="function">
    <text evidence="1">Core subunit of the mitochondrial membrane respiratory chain NADH dehydrogenase (Complex I) which catalyzes electron transfer from NADH through the respiratory chain, using ubiquinone as an electron acceptor. Part of the enzyme membrane arm which is embedded in the lipid bilayer and involved in proton translocation.</text>
</comment>
<comment type="catalytic activity">
    <reaction evidence="1">
        <text>a ubiquinone + NADH + 5 H(+)(in) = a ubiquinol + NAD(+) + 4 H(+)(out)</text>
        <dbReference type="Rhea" id="RHEA:29091"/>
        <dbReference type="Rhea" id="RHEA-COMP:9565"/>
        <dbReference type="Rhea" id="RHEA-COMP:9566"/>
        <dbReference type="ChEBI" id="CHEBI:15378"/>
        <dbReference type="ChEBI" id="CHEBI:16389"/>
        <dbReference type="ChEBI" id="CHEBI:17976"/>
        <dbReference type="ChEBI" id="CHEBI:57540"/>
        <dbReference type="ChEBI" id="CHEBI:57945"/>
        <dbReference type="EC" id="7.1.1.2"/>
    </reaction>
    <physiologicalReaction direction="left-to-right" evidence="1">
        <dbReference type="Rhea" id="RHEA:29092"/>
    </physiologicalReaction>
</comment>
<comment type="subunit">
    <text evidence="2">Core subunit of respiratory chain NADH dehydrogenase (Complex I) which is composed of 45 different subunits.</text>
</comment>
<comment type="subcellular location">
    <subcellularLocation>
        <location evidence="2">Mitochondrion inner membrane</location>
        <topology evidence="3">Multi-pass membrane protein</topology>
    </subcellularLocation>
</comment>
<comment type="similarity">
    <text evidence="4">Belongs to the complex I subunit 4L family.</text>
</comment>
<proteinExistence type="inferred from homology"/>
<gene>
    <name type="primary">MT-ND4L</name>
    <name type="synonym">MTND4L</name>
    <name type="synonym">NADH4L</name>
    <name type="synonym">ND4L</name>
</gene>
<reference key="1">
    <citation type="journal article" date="1996" name="J. Mol. Evol.">
        <title>The mitochondrial genome of a monotreme--the platypus (Ornithorhynchus anatinus).</title>
        <authorList>
            <person name="Janke A."/>
            <person name="Gemmell N.J."/>
            <person name="Feldmaier-Fuchs G."/>
            <person name="von Haeseler A."/>
            <person name="Paabo S."/>
        </authorList>
    </citation>
    <scope>NUCLEOTIDE SEQUENCE [LARGE SCALE GENOMIC DNA]</scope>
    <source>
        <strain evidence="5">Glennie</strain>
    </source>
</reference>
<accession>Q36457</accession>
<feature type="chain" id="PRO_0000118462" description="NADH-ubiquinone oxidoreductase chain 4L">
    <location>
        <begin position="1"/>
        <end position="98"/>
    </location>
</feature>
<feature type="transmembrane region" description="Helical" evidence="3">
    <location>
        <begin position="1"/>
        <end position="21"/>
    </location>
</feature>
<feature type="transmembrane region" description="Helical" evidence="3">
    <location>
        <begin position="29"/>
        <end position="49"/>
    </location>
</feature>
<feature type="transmembrane region" description="Helical" evidence="3">
    <location>
        <begin position="59"/>
        <end position="79"/>
    </location>
</feature>
<protein>
    <recommendedName>
        <fullName>NADH-ubiquinone oxidoreductase chain 4L</fullName>
        <ecNumber>7.1.1.2</ecNumber>
    </recommendedName>
    <alternativeName>
        <fullName>NADH dehydrogenase subunit 4L</fullName>
    </alternativeName>
</protein>
<name>NU4LM_ORNAN</name>
<dbReference type="EC" id="7.1.1.2"/>
<dbReference type="EMBL" id="X83427">
    <property type="protein sequence ID" value="CAA58463.1"/>
    <property type="molecule type" value="Genomic_DNA"/>
</dbReference>
<dbReference type="PIR" id="A58889">
    <property type="entry name" value="A58889"/>
</dbReference>
<dbReference type="RefSeq" id="NP_008051.1">
    <property type="nucleotide sequence ID" value="NC_000891.1"/>
</dbReference>
<dbReference type="SMR" id="Q36457"/>
<dbReference type="FunCoup" id="Q36457">
    <property type="interactions" value="214"/>
</dbReference>
<dbReference type="STRING" id="9258.ENSOANP00000024989"/>
<dbReference type="Ensembl" id="ENSOANT00000028491.1">
    <property type="protein sequence ID" value="ENSOANP00000024989.1"/>
    <property type="gene ID" value="ENSOANG00000019367.1"/>
</dbReference>
<dbReference type="GeneID" id="808698"/>
<dbReference type="KEGG" id="oaa:808698"/>
<dbReference type="CTD" id="4539"/>
<dbReference type="eggNOG" id="KOG4669">
    <property type="taxonomic scope" value="Eukaryota"/>
</dbReference>
<dbReference type="GeneTree" id="ENSGT00390000004755"/>
<dbReference type="HOGENOM" id="CLU_182394_0_0_1"/>
<dbReference type="InParanoid" id="Q36457"/>
<dbReference type="OMA" id="MYRSHLM"/>
<dbReference type="OrthoDB" id="6146597at2759"/>
<dbReference type="TreeFam" id="TF338190"/>
<dbReference type="Proteomes" id="UP000002279">
    <property type="component" value="Mitochondrion"/>
</dbReference>
<dbReference type="Bgee" id="ENSOANG00000019367">
    <property type="expression patterns" value="Expressed in heart and 7 other cell types or tissues"/>
</dbReference>
<dbReference type="GO" id="GO:0005743">
    <property type="term" value="C:mitochondrial inner membrane"/>
    <property type="evidence" value="ECO:0000250"/>
    <property type="project" value="UniProtKB"/>
</dbReference>
<dbReference type="GO" id="GO:0045271">
    <property type="term" value="C:respiratory chain complex I"/>
    <property type="evidence" value="ECO:0000250"/>
    <property type="project" value="UniProtKB"/>
</dbReference>
<dbReference type="GO" id="GO:0008137">
    <property type="term" value="F:NADH dehydrogenase (ubiquinone) activity"/>
    <property type="evidence" value="ECO:0000250"/>
    <property type="project" value="UniProtKB"/>
</dbReference>
<dbReference type="GO" id="GO:0042773">
    <property type="term" value="P:ATP synthesis coupled electron transport"/>
    <property type="evidence" value="ECO:0007669"/>
    <property type="project" value="InterPro"/>
</dbReference>
<dbReference type="FunFam" id="1.10.287.3510:FF:000002">
    <property type="entry name" value="NADH-ubiquinone oxidoreductase chain 4L"/>
    <property type="match status" value="1"/>
</dbReference>
<dbReference type="Gene3D" id="1.10.287.3510">
    <property type="match status" value="1"/>
</dbReference>
<dbReference type="InterPro" id="IPR001133">
    <property type="entry name" value="NADH_UbQ_OxRdtase_chain4L/K"/>
</dbReference>
<dbReference type="InterPro" id="IPR039428">
    <property type="entry name" value="NUOK/Mnh_C1-like"/>
</dbReference>
<dbReference type="PANTHER" id="PTHR11434:SF0">
    <property type="entry name" value="NADH-UBIQUINONE OXIDOREDUCTASE CHAIN 4L"/>
    <property type="match status" value="1"/>
</dbReference>
<dbReference type="PANTHER" id="PTHR11434">
    <property type="entry name" value="NADH-UBIQUINONE OXIDOREDUCTASE SUBUNIT ND4L"/>
    <property type="match status" value="1"/>
</dbReference>
<dbReference type="Pfam" id="PF00420">
    <property type="entry name" value="Oxidored_q2"/>
    <property type="match status" value="1"/>
</dbReference>
<keyword id="KW-0249">Electron transport</keyword>
<keyword id="KW-0472">Membrane</keyword>
<keyword id="KW-0496">Mitochondrion</keyword>
<keyword id="KW-0999">Mitochondrion inner membrane</keyword>
<keyword id="KW-0520">NAD</keyword>
<keyword id="KW-1185">Reference proteome</keyword>
<keyword id="KW-0679">Respiratory chain</keyword>
<keyword id="KW-1278">Translocase</keyword>
<keyword id="KW-0812">Transmembrane</keyword>
<keyword id="KW-1133">Transmembrane helix</keyword>
<keyword id="KW-0813">Transport</keyword>
<keyword id="KW-0830">Ubiquinone</keyword>